<protein>
    <recommendedName>
        <fullName evidence="1">Large ribosomal subunit protein bL33B</fullName>
    </recommendedName>
    <alternativeName>
        <fullName>50S ribosomal protein L33 2</fullName>
    </alternativeName>
</protein>
<gene>
    <name type="primary">rpmGB</name>
    <name type="synonym">rpmG</name>
    <name type="synonym">rpmG2</name>
</gene>
<accession>P35870</accession>
<dbReference type="EMBL" id="X00413">
    <property type="status" value="NOT_ANNOTATED_CDS"/>
    <property type="molecule type" value="Genomic_DNA"/>
</dbReference>
<dbReference type="EMBL" id="M29694">
    <property type="status" value="NOT_ANNOTATED_CDS"/>
    <property type="molecule type" value="Genomic_DNA"/>
</dbReference>
<dbReference type="RefSeq" id="WP_020449849.1">
    <property type="nucleotide sequence ID" value="NZ_CP023665.1"/>
</dbReference>
<dbReference type="SMR" id="P35870"/>
<dbReference type="GeneID" id="56669812"/>
<dbReference type="GO" id="GO:0005737">
    <property type="term" value="C:cytoplasm"/>
    <property type="evidence" value="ECO:0007669"/>
    <property type="project" value="UniProtKB-ARBA"/>
</dbReference>
<dbReference type="GO" id="GO:1990904">
    <property type="term" value="C:ribonucleoprotein complex"/>
    <property type="evidence" value="ECO:0007669"/>
    <property type="project" value="UniProtKB-KW"/>
</dbReference>
<dbReference type="GO" id="GO:0005840">
    <property type="term" value="C:ribosome"/>
    <property type="evidence" value="ECO:0007669"/>
    <property type="project" value="UniProtKB-KW"/>
</dbReference>
<dbReference type="GO" id="GO:0003735">
    <property type="term" value="F:structural constituent of ribosome"/>
    <property type="evidence" value="ECO:0007669"/>
    <property type="project" value="InterPro"/>
</dbReference>
<dbReference type="GO" id="GO:0006412">
    <property type="term" value="P:translation"/>
    <property type="evidence" value="ECO:0007669"/>
    <property type="project" value="UniProtKB-UniRule"/>
</dbReference>
<dbReference type="Gene3D" id="2.20.28.120">
    <property type="entry name" value="Ribosomal protein L33"/>
    <property type="match status" value="1"/>
</dbReference>
<dbReference type="HAMAP" id="MF_00294">
    <property type="entry name" value="Ribosomal_bL33"/>
    <property type="match status" value="1"/>
</dbReference>
<dbReference type="InterPro" id="IPR001705">
    <property type="entry name" value="Ribosomal_bL33"/>
</dbReference>
<dbReference type="InterPro" id="IPR018264">
    <property type="entry name" value="Ribosomal_bL33_CS"/>
</dbReference>
<dbReference type="InterPro" id="IPR038584">
    <property type="entry name" value="Ribosomal_bL33_sf"/>
</dbReference>
<dbReference type="InterPro" id="IPR011332">
    <property type="entry name" value="Ribosomal_zn-bd"/>
</dbReference>
<dbReference type="NCBIfam" id="NF001764">
    <property type="entry name" value="PRK00504.1"/>
    <property type="match status" value="1"/>
</dbReference>
<dbReference type="NCBIfam" id="NF001860">
    <property type="entry name" value="PRK00595.1"/>
    <property type="match status" value="1"/>
</dbReference>
<dbReference type="NCBIfam" id="TIGR01023">
    <property type="entry name" value="rpmG_bact"/>
    <property type="match status" value="1"/>
</dbReference>
<dbReference type="PANTHER" id="PTHR43168">
    <property type="entry name" value="50S RIBOSOMAL PROTEIN L33, CHLOROPLASTIC"/>
    <property type="match status" value="1"/>
</dbReference>
<dbReference type="PANTHER" id="PTHR43168:SF5">
    <property type="entry name" value="LARGE RIBOSOMAL SUBUNIT PROTEIN BL33B"/>
    <property type="match status" value="1"/>
</dbReference>
<dbReference type="Pfam" id="PF00471">
    <property type="entry name" value="Ribosomal_L33"/>
    <property type="match status" value="1"/>
</dbReference>
<dbReference type="SUPFAM" id="SSF57829">
    <property type="entry name" value="Zn-binding ribosomal proteins"/>
    <property type="match status" value="1"/>
</dbReference>
<dbReference type="PROSITE" id="PS00582">
    <property type="entry name" value="RIBOSOMAL_L33"/>
    <property type="match status" value="1"/>
</dbReference>
<proteinExistence type="inferred from homology"/>
<evidence type="ECO:0000255" key="1">
    <source>
        <dbReference type="HAMAP-Rule" id="MF_00294"/>
    </source>
</evidence>
<evidence type="ECO:0000305" key="2"/>
<name>RL332_BACLI</name>
<organism>
    <name type="scientific">Bacillus licheniformis</name>
    <dbReference type="NCBI Taxonomy" id="1402"/>
    <lineage>
        <taxon>Bacteria</taxon>
        <taxon>Bacillati</taxon>
        <taxon>Bacillota</taxon>
        <taxon>Bacilli</taxon>
        <taxon>Bacillales</taxon>
        <taxon>Bacillaceae</taxon>
        <taxon>Bacillus</taxon>
    </lineage>
</organism>
<feature type="chain" id="PRO_0000170139" description="Large ribosomal subunit protein bL33B">
    <location>
        <begin position="1"/>
        <end position="49"/>
    </location>
</feature>
<keyword id="KW-0687">Ribonucleoprotein</keyword>
<keyword id="KW-0689">Ribosomal protein</keyword>
<reference key="1">
    <citation type="journal article" date="1984" name="Nucleic Acids Res.">
        <title>The complete DNA sequence and regulatory regions of the Bacillus licheniformis spoOH gene.</title>
        <authorList>
            <person name="Ramakrishna N."/>
            <person name="Dubnau E."/>
            <person name="Smith I."/>
        </authorList>
    </citation>
    <scope>NUCLEOTIDE SEQUENCE [GENOMIC DNA]</scope>
    <source>
        <strain>FD02</strain>
    </source>
</reference>
<reference key="2">
    <citation type="journal article" date="1988" name="J. Bacteriol.">
        <title>Bacillus sporulation gene spo0H codes for sigma 30 (sigma H).</title>
        <authorList>
            <person name="Dubnau E."/>
            <person name="Weir J."/>
            <person name="Nair G."/>
            <person name="Carter L. III"/>
            <person name="Moran C.P. Jr."/>
            <person name="Smith I."/>
        </authorList>
    </citation>
    <scope>NUCLEOTIDE SEQUENCE [GENOMIC DNA]</scope>
</reference>
<reference key="3">
    <citation type="journal article" date="1994" name="Gene">
        <title>Identification of genes encoding ribosomal protein L33 from Bacillus licheniformis, Thermus thermophilus and Thermotoga maritima.</title>
        <authorList>
            <person name="Sharp P.M."/>
        </authorList>
    </citation>
    <scope>IDENTIFICATION</scope>
</reference>
<sequence>MKKKVTLACKNCGSRNYTTMKSSAALAERLEVKKYCNNCNSHTVHLETK</sequence>
<comment type="similarity">
    <text evidence="2">Belongs to the bacterial ribosomal protein bL33 family.</text>
</comment>